<organism>
    <name type="scientific">Pseudomonas syringae pv. tomato (strain ATCC BAA-871 / DC3000)</name>
    <dbReference type="NCBI Taxonomy" id="223283"/>
    <lineage>
        <taxon>Bacteria</taxon>
        <taxon>Pseudomonadati</taxon>
        <taxon>Pseudomonadota</taxon>
        <taxon>Gammaproteobacteria</taxon>
        <taxon>Pseudomonadales</taxon>
        <taxon>Pseudomonadaceae</taxon>
        <taxon>Pseudomonas</taxon>
    </lineage>
</organism>
<gene>
    <name evidence="1" type="primary">tatA</name>
    <name type="ordered locus">PSPTO_5155</name>
    <name type="ORF">PSPTO5155</name>
</gene>
<reference key="1">
    <citation type="journal article" date="2003" name="Proc. Natl. Acad. Sci. U.S.A.">
        <title>The complete genome sequence of the Arabidopsis and tomato pathogen Pseudomonas syringae pv. tomato DC3000.</title>
        <authorList>
            <person name="Buell C.R."/>
            <person name="Joardar V."/>
            <person name="Lindeberg M."/>
            <person name="Selengut J."/>
            <person name="Paulsen I.T."/>
            <person name="Gwinn M.L."/>
            <person name="Dodson R.J."/>
            <person name="DeBoy R.T."/>
            <person name="Durkin A.S."/>
            <person name="Kolonay J.F."/>
            <person name="Madupu R."/>
            <person name="Daugherty S.C."/>
            <person name="Brinkac L.M."/>
            <person name="Beanan M.J."/>
            <person name="Haft D.H."/>
            <person name="Nelson W.C."/>
            <person name="Davidsen T.M."/>
            <person name="Zafar N."/>
            <person name="Zhou L."/>
            <person name="Liu J."/>
            <person name="Yuan Q."/>
            <person name="Khouri H.M."/>
            <person name="Fedorova N.B."/>
            <person name="Tran B."/>
            <person name="Russell D."/>
            <person name="Berry K.J."/>
            <person name="Utterback T.R."/>
            <person name="Van Aken S.E."/>
            <person name="Feldblyum T.V."/>
            <person name="D'Ascenzo M."/>
            <person name="Deng W.-L."/>
            <person name="Ramos A.R."/>
            <person name="Alfano J.R."/>
            <person name="Cartinhour S."/>
            <person name="Chatterjee A.K."/>
            <person name="Delaney T.P."/>
            <person name="Lazarowitz S.G."/>
            <person name="Martin G.B."/>
            <person name="Schneider D.J."/>
            <person name="Tang X."/>
            <person name="Bender C.L."/>
            <person name="White O."/>
            <person name="Fraser C.M."/>
            <person name="Collmer A."/>
        </authorList>
    </citation>
    <scope>NUCLEOTIDE SEQUENCE [LARGE SCALE GENOMIC DNA]</scope>
    <source>
        <strain>ATCC BAA-871 / DC3000</strain>
    </source>
</reference>
<dbReference type="EMBL" id="AE016853">
    <property type="protein sequence ID" value="AAO58581.1"/>
    <property type="molecule type" value="Genomic_DNA"/>
</dbReference>
<dbReference type="RefSeq" id="NP_794886.1">
    <property type="nucleotide sequence ID" value="NC_004578.1"/>
</dbReference>
<dbReference type="RefSeq" id="WP_003378893.1">
    <property type="nucleotide sequence ID" value="NC_004578.1"/>
</dbReference>
<dbReference type="SMR" id="Q87UY7"/>
<dbReference type="STRING" id="223283.PSPTO_5155"/>
<dbReference type="KEGG" id="pst:PSPTO_5155"/>
<dbReference type="PATRIC" id="fig|223283.9.peg.5276"/>
<dbReference type="eggNOG" id="COG1826">
    <property type="taxonomic scope" value="Bacteria"/>
</dbReference>
<dbReference type="HOGENOM" id="CLU_086034_5_1_6"/>
<dbReference type="PhylomeDB" id="Q87UY7"/>
<dbReference type="Proteomes" id="UP000002515">
    <property type="component" value="Chromosome"/>
</dbReference>
<dbReference type="GO" id="GO:0033281">
    <property type="term" value="C:TAT protein transport complex"/>
    <property type="evidence" value="ECO:0007669"/>
    <property type="project" value="UniProtKB-UniRule"/>
</dbReference>
<dbReference type="GO" id="GO:0008320">
    <property type="term" value="F:protein transmembrane transporter activity"/>
    <property type="evidence" value="ECO:0007669"/>
    <property type="project" value="UniProtKB-UniRule"/>
</dbReference>
<dbReference type="GO" id="GO:0043953">
    <property type="term" value="P:protein transport by the Tat complex"/>
    <property type="evidence" value="ECO:0007669"/>
    <property type="project" value="UniProtKB-UniRule"/>
</dbReference>
<dbReference type="FunFam" id="1.20.5.3310:FF:000001">
    <property type="entry name" value="Probable Sec-independent protein translocase protein TatE"/>
    <property type="match status" value="1"/>
</dbReference>
<dbReference type="Gene3D" id="1.20.5.3310">
    <property type="match status" value="1"/>
</dbReference>
<dbReference type="HAMAP" id="MF_00236">
    <property type="entry name" value="TatA_E"/>
    <property type="match status" value="1"/>
</dbReference>
<dbReference type="InterPro" id="IPR003369">
    <property type="entry name" value="TatA/B/E"/>
</dbReference>
<dbReference type="InterPro" id="IPR006312">
    <property type="entry name" value="TatA/E"/>
</dbReference>
<dbReference type="NCBIfam" id="NF001681">
    <property type="entry name" value="PRK00442.1"/>
    <property type="match status" value="1"/>
</dbReference>
<dbReference type="NCBIfam" id="TIGR01411">
    <property type="entry name" value="tatAE"/>
    <property type="match status" value="1"/>
</dbReference>
<dbReference type="PANTHER" id="PTHR42982">
    <property type="entry name" value="SEC-INDEPENDENT PROTEIN TRANSLOCASE PROTEIN TATA"/>
    <property type="match status" value="1"/>
</dbReference>
<dbReference type="PANTHER" id="PTHR42982:SF1">
    <property type="entry name" value="SEC-INDEPENDENT PROTEIN TRANSLOCASE PROTEIN TATA"/>
    <property type="match status" value="1"/>
</dbReference>
<dbReference type="Pfam" id="PF02416">
    <property type="entry name" value="TatA_B_E"/>
    <property type="match status" value="1"/>
</dbReference>
<protein>
    <recommendedName>
        <fullName evidence="1">Sec-independent protein translocase protein TatA</fullName>
    </recommendedName>
</protein>
<comment type="function">
    <text evidence="1">Part of the twin-arginine translocation (Tat) system that transports large folded proteins containing a characteristic twin-arginine motif in their signal peptide across membranes. TatA could form the protein-conducting channel of the Tat system.</text>
</comment>
<comment type="subunit">
    <text evidence="1">The Tat system comprises two distinct complexes: a TatABC complex, containing multiple copies of TatA, TatB and TatC subunits, and a separate TatA complex, containing only TatA subunits. Substrates initially bind to the TatABC complex, which probably triggers association of the separate TatA complex to form the active translocon.</text>
</comment>
<comment type="subcellular location">
    <subcellularLocation>
        <location evidence="1">Cell inner membrane</location>
        <topology evidence="1">Single-pass membrane protein</topology>
    </subcellularLocation>
</comment>
<comment type="similarity">
    <text evidence="1">Belongs to the TatA/E family.</text>
</comment>
<accession>Q87UY7</accession>
<feature type="chain" id="PRO_1000197896" description="Sec-independent protein translocase protein TatA">
    <location>
        <begin position="1"/>
        <end position="91"/>
    </location>
</feature>
<feature type="transmembrane region" description="Helical" evidence="1">
    <location>
        <begin position="1"/>
        <end position="21"/>
    </location>
</feature>
<feature type="region of interest" description="Disordered" evidence="2">
    <location>
        <begin position="42"/>
        <end position="91"/>
    </location>
</feature>
<feature type="compositionally biased region" description="Low complexity" evidence="2">
    <location>
        <begin position="51"/>
        <end position="64"/>
    </location>
</feature>
<feature type="compositionally biased region" description="Basic and acidic residues" evidence="2">
    <location>
        <begin position="78"/>
        <end position="91"/>
    </location>
</feature>
<name>TATA_PSESM</name>
<sequence length="91" mass="10084">MGIFDWKHWIVILIVVVLVFGTKKLKGLGTDVGESIKGFRKAMHDDDKPAEQPAPQPQQAQPAPQGSPLNQPHTIDAQAHKVDEPIRKDQV</sequence>
<keyword id="KW-0997">Cell inner membrane</keyword>
<keyword id="KW-1003">Cell membrane</keyword>
<keyword id="KW-0472">Membrane</keyword>
<keyword id="KW-0653">Protein transport</keyword>
<keyword id="KW-1185">Reference proteome</keyword>
<keyword id="KW-0811">Translocation</keyword>
<keyword id="KW-0812">Transmembrane</keyword>
<keyword id="KW-1133">Transmembrane helix</keyword>
<keyword id="KW-0813">Transport</keyword>
<evidence type="ECO:0000255" key="1">
    <source>
        <dbReference type="HAMAP-Rule" id="MF_00236"/>
    </source>
</evidence>
<evidence type="ECO:0000256" key="2">
    <source>
        <dbReference type="SAM" id="MobiDB-lite"/>
    </source>
</evidence>
<proteinExistence type="inferred from homology"/>